<evidence type="ECO:0000255" key="1">
    <source>
        <dbReference type="HAMAP-Rule" id="MF_00147"/>
    </source>
</evidence>
<organism>
    <name type="scientific">Natranaerobius thermophilus (strain ATCC BAA-1301 / DSM 18059 / JW/NM-WN-LF)</name>
    <dbReference type="NCBI Taxonomy" id="457570"/>
    <lineage>
        <taxon>Bacteria</taxon>
        <taxon>Bacillati</taxon>
        <taxon>Bacillota</taxon>
        <taxon>Clostridia</taxon>
        <taxon>Natranaerobiales</taxon>
        <taxon>Natranaerobiaceae</taxon>
        <taxon>Natranaerobius</taxon>
    </lineage>
</organism>
<accession>B2A6Z3</accession>
<name>TPIS_NATTJ</name>
<sequence length="256" mass="28041">MARTIIAGNWKMNHGPRETREFVAGMKEKYQTPPAVETVICPPFVSISDLVNESPEWLKTGAQNVYFEESGAFTGEVSPKMLAELGVEYVIIGHSERRNIFAESDEEVNKKVRIALKYGIKPIICVGESDAQRNEGKTLEVVENQVKSALSEVVSDTLQNVVFAYEPVWAIGSGKAATGEDAEQVCKHIRSVISELNSSVADDIPVLYGGSVKPENLEEFMDQDNINGALVGGKSLVAETYCQLLEVARRFPGDEG</sequence>
<gene>
    <name evidence="1" type="primary">tpiA</name>
    <name type="ordered locus">Nther_2017</name>
</gene>
<feature type="chain" id="PRO_1000096514" description="Triosephosphate isomerase">
    <location>
        <begin position="1"/>
        <end position="256"/>
    </location>
</feature>
<feature type="active site" description="Electrophile" evidence="1">
    <location>
        <position position="94"/>
    </location>
</feature>
<feature type="active site" description="Proton acceptor" evidence="1">
    <location>
        <position position="166"/>
    </location>
</feature>
<feature type="binding site" evidence="1">
    <location>
        <begin position="9"/>
        <end position="11"/>
    </location>
    <ligand>
        <name>substrate</name>
    </ligand>
</feature>
<feature type="binding site" evidence="1">
    <location>
        <position position="172"/>
    </location>
    <ligand>
        <name>substrate</name>
    </ligand>
</feature>
<feature type="binding site" evidence="1">
    <location>
        <position position="211"/>
    </location>
    <ligand>
        <name>substrate</name>
    </ligand>
</feature>
<feature type="binding site" evidence="1">
    <location>
        <begin position="232"/>
        <end position="233"/>
    </location>
    <ligand>
        <name>substrate</name>
    </ligand>
</feature>
<dbReference type="EC" id="5.3.1.1" evidence="1"/>
<dbReference type="EMBL" id="CP001034">
    <property type="protein sequence ID" value="ACB85584.1"/>
    <property type="molecule type" value="Genomic_DNA"/>
</dbReference>
<dbReference type="RefSeq" id="WP_012448441.1">
    <property type="nucleotide sequence ID" value="NC_010718.1"/>
</dbReference>
<dbReference type="SMR" id="B2A6Z3"/>
<dbReference type="FunCoup" id="B2A6Z3">
    <property type="interactions" value="384"/>
</dbReference>
<dbReference type="STRING" id="457570.Nther_2017"/>
<dbReference type="KEGG" id="nth:Nther_2017"/>
<dbReference type="eggNOG" id="COG0149">
    <property type="taxonomic scope" value="Bacteria"/>
</dbReference>
<dbReference type="HOGENOM" id="CLU_024251_2_3_9"/>
<dbReference type="InParanoid" id="B2A6Z3"/>
<dbReference type="OrthoDB" id="9809429at2"/>
<dbReference type="UniPathway" id="UPA00109">
    <property type="reaction ID" value="UER00189"/>
</dbReference>
<dbReference type="UniPathway" id="UPA00138"/>
<dbReference type="Proteomes" id="UP000001683">
    <property type="component" value="Chromosome"/>
</dbReference>
<dbReference type="GO" id="GO:0005829">
    <property type="term" value="C:cytosol"/>
    <property type="evidence" value="ECO:0007669"/>
    <property type="project" value="TreeGrafter"/>
</dbReference>
<dbReference type="GO" id="GO:0004807">
    <property type="term" value="F:triose-phosphate isomerase activity"/>
    <property type="evidence" value="ECO:0007669"/>
    <property type="project" value="UniProtKB-UniRule"/>
</dbReference>
<dbReference type="GO" id="GO:0006094">
    <property type="term" value="P:gluconeogenesis"/>
    <property type="evidence" value="ECO:0007669"/>
    <property type="project" value="UniProtKB-UniRule"/>
</dbReference>
<dbReference type="GO" id="GO:0046166">
    <property type="term" value="P:glyceraldehyde-3-phosphate biosynthetic process"/>
    <property type="evidence" value="ECO:0007669"/>
    <property type="project" value="TreeGrafter"/>
</dbReference>
<dbReference type="GO" id="GO:0019563">
    <property type="term" value="P:glycerol catabolic process"/>
    <property type="evidence" value="ECO:0007669"/>
    <property type="project" value="TreeGrafter"/>
</dbReference>
<dbReference type="GO" id="GO:0006096">
    <property type="term" value="P:glycolytic process"/>
    <property type="evidence" value="ECO:0007669"/>
    <property type="project" value="UniProtKB-UniRule"/>
</dbReference>
<dbReference type="CDD" id="cd00311">
    <property type="entry name" value="TIM"/>
    <property type="match status" value="1"/>
</dbReference>
<dbReference type="FunFam" id="3.20.20.70:FF:000016">
    <property type="entry name" value="Triosephosphate isomerase"/>
    <property type="match status" value="1"/>
</dbReference>
<dbReference type="Gene3D" id="3.20.20.70">
    <property type="entry name" value="Aldolase class I"/>
    <property type="match status" value="1"/>
</dbReference>
<dbReference type="HAMAP" id="MF_00147_B">
    <property type="entry name" value="TIM_B"/>
    <property type="match status" value="1"/>
</dbReference>
<dbReference type="InterPro" id="IPR013785">
    <property type="entry name" value="Aldolase_TIM"/>
</dbReference>
<dbReference type="InterPro" id="IPR035990">
    <property type="entry name" value="TIM_sf"/>
</dbReference>
<dbReference type="InterPro" id="IPR022896">
    <property type="entry name" value="TrioseP_Isoase_bac/euk"/>
</dbReference>
<dbReference type="InterPro" id="IPR000652">
    <property type="entry name" value="Triosephosphate_isomerase"/>
</dbReference>
<dbReference type="InterPro" id="IPR020861">
    <property type="entry name" value="Triosephosphate_isomerase_AS"/>
</dbReference>
<dbReference type="NCBIfam" id="TIGR00419">
    <property type="entry name" value="tim"/>
    <property type="match status" value="1"/>
</dbReference>
<dbReference type="PANTHER" id="PTHR21139">
    <property type="entry name" value="TRIOSEPHOSPHATE ISOMERASE"/>
    <property type="match status" value="1"/>
</dbReference>
<dbReference type="PANTHER" id="PTHR21139:SF42">
    <property type="entry name" value="TRIOSEPHOSPHATE ISOMERASE"/>
    <property type="match status" value="1"/>
</dbReference>
<dbReference type="Pfam" id="PF00121">
    <property type="entry name" value="TIM"/>
    <property type="match status" value="1"/>
</dbReference>
<dbReference type="SUPFAM" id="SSF51351">
    <property type="entry name" value="Triosephosphate isomerase (TIM)"/>
    <property type="match status" value="1"/>
</dbReference>
<dbReference type="PROSITE" id="PS00171">
    <property type="entry name" value="TIM_1"/>
    <property type="match status" value="1"/>
</dbReference>
<dbReference type="PROSITE" id="PS51440">
    <property type="entry name" value="TIM_2"/>
    <property type="match status" value="1"/>
</dbReference>
<reference key="1">
    <citation type="submission" date="2008-04" db="EMBL/GenBank/DDBJ databases">
        <title>Complete sequence of chromosome of Natranaerobius thermophilus JW/NM-WN-LF.</title>
        <authorList>
            <consortium name="US DOE Joint Genome Institute"/>
            <person name="Copeland A."/>
            <person name="Lucas S."/>
            <person name="Lapidus A."/>
            <person name="Glavina del Rio T."/>
            <person name="Dalin E."/>
            <person name="Tice H."/>
            <person name="Bruce D."/>
            <person name="Goodwin L."/>
            <person name="Pitluck S."/>
            <person name="Chertkov O."/>
            <person name="Brettin T."/>
            <person name="Detter J.C."/>
            <person name="Han C."/>
            <person name="Kuske C.R."/>
            <person name="Schmutz J."/>
            <person name="Larimer F."/>
            <person name="Land M."/>
            <person name="Hauser L."/>
            <person name="Kyrpides N."/>
            <person name="Lykidis A."/>
            <person name="Mesbah N.M."/>
            <person name="Wiegel J."/>
        </authorList>
    </citation>
    <scope>NUCLEOTIDE SEQUENCE [LARGE SCALE GENOMIC DNA]</scope>
    <source>
        <strain>ATCC BAA-1301 / DSM 18059 / JW/NM-WN-LF</strain>
    </source>
</reference>
<comment type="function">
    <text evidence="1">Involved in the gluconeogenesis. Catalyzes stereospecifically the conversion of dihydroxyacetone phosphate (DHAP) to D-glyceraldehyde-3-phosphate (G3P).</text>
</comment>
<comment type="catalytic activity">
    <reaction evidence="1">
        <text>D-glyceraldehyde 3-phosphate = dihydroxyacetone phosphate</text>
        <dbReference type="Rhea" id="RHEA:18585"/>
        <dbReference type="ChEBI" id="CHEBI:57642"/>
        <dbReference type="ChEBI" id="CHEBI:59776"/>
        <dbReference type="EC" id="5.3.1.1"/>
    </reaction>
</comment>
<comment type="pathway">
    <text evidence="1">Carbohydrate biosynthesis; gluconeogenesis.</text>
</comment>
<comment type="pathway">
    <text evidence="1">Carbohydrate degradation; glycolysis; D-glyceraldehyde 3-phosphate from glycerone phosphate: step 1/1.</text>
</comment>
<comment type="subunit">
    <text evidence="1">Homodimer.</text>
</comment>
<comment type="subcellular location">
    <subcellularLocation>
        <location evidence="1">Cytoplasm</location>
    </subcellularLocation>
</comment>
<comment type="similarity">
    <text evidence="1">Belongs to the triosephosphate isomerase family.</text>
</comment>
<proteinExistence type="inferred from homology"/>
<keyword id="KW-0963">Cytoplasm</keyword>
<keyword id="KW-0312">Gluconeogenesis</keyword>
<keyword id="KW-0324">Glycolysis</keyword>
<keyword id="KW-0413">Isomerase</keyword>
<keyword id="KW-1185">Reference proteome</keyword>
<protein>
    <recommendedName>
        <fullName evidence="1">Triosephosphate isomerase</fullName>
        <shortName evidence="1">TIM</shortName>
        <shortName evidence="1">TPI</shortName>
        <ecNumber evidence="1">5.3.1.1</ecNumber>
    </recommendedName>
    <alternativeName>
        <fullName evidence="1">Triose-phosphate isomerase</fullName>
    </alternativeName>
</protein>